<dbReference type="EMBL" id="AK014505">
    <property type="protein sequence ID" value="BAB29403.1"/>
    <property type="molecule type" value="mRNA"/>
</dbReference>
<dbReference type="EMBL" id="AC127255">
    <property type="status" value="NOT_ANNOTATED_CDS"/>
    <property type="molecule type" value="Genomic_DNA"/>
</dbReference>
<dbReference type="EMBL" id="AC122282">
    <property type="status" value="NOT_ANNOTATED_CDS"/>
    <property type="molecule type" value="Genomic_DNA"/>
</dbReference>
<dbReference type="EMBL" id="AF426467">
    <property type="protein sequence ID" value="AAL26547.1"/>
    <property type="molecule type" value="mRNA"/>
</dbReference>
<dbReference type="SMR" id="Q9D6A1"/>
<dbReference type="FunCoup" id="Q9D6A1">
    <property type="interactions" value="31"/>
</dbReference>
<dbReference type="STRING" id="10090.ENSMUSP00000144110"/>
<dbReference type="iPTMnet" id="Q9D6A1"/>
<dbReference type="PhosphoSitePlus" id="Q9D6A1"/>
<dbReference type="PaxDb" id="10090-ENSMUSP00000132905"/>
<dbReference type="ProteomicsDB" id="286103">
    <molecule id="Q9D6A1-1"/>
</dbReference>
<dbReference type="Antibodypedia" id="48152">
    <property type="antibodies" value="37 antibodies from 13 providers"/>
</dbReference>
<dbReference type="Ensembl" id="ENSMUST00000124316.8">
    <molecule id="Q9D6A1-1"/>
    <property type="protein sequence ID" value="ENSMUSP00000118824.3"/>
    <property type="gene ID" value="ENSMUSG00000066952.12"/>
</dbReference>
<dbReference type="AGR" id="MGI:1914674"/>
<dbReference type="MGI" id="MGI:1914674">
    <property type="gene designation" value="Myo1h"/>
</dbReference>
<dbReference type="VEuPathDB" id="HostDB:ENSMUSG00000066952"/>
<dbReference type="eggNOG" id="KOG0164">
    <property type="taxonomic scope" value="Eukaryota"/>
</dbReference>
<dbReference type="GeneTree" id="ENSGT00940000156430"/>
<dbReference type="HOGENOM" id="CLU_000192_7_7_1"/>
<dbReference type="InParanoid" id="Q9D6A1"/>
<dbReference type="PhylomeDB" id="Q9D6A1"/>
<dbReference type="ChiTaRS" id="Myo1h">
    <property type="organism name" value="mouse"/>
</dbReference>
<dbReference type="PRO" id="PR:Q9D6A1"/>
<dbReference type="Proteomes" id="UP000000589">
    <property type="component" value="Chromosome 5"/>
</dbReference>
<dbReference type="RNAct" id="Q9D6A1">
    <property type="molecule type" value="protein"/>
</dbReference>
<dbReference type="Bgee" id="ENSMUSG00000066952">
    <property type="expression patterns" value="Expressed in ascending aorta and 86 other cell types or tissues"/>
</dbReference>
<dbReference type="ExpressionAtlas" id="Q9D6A1">
    <property type="expression patterns" value="baseline and differential"/>
</dbReference>
<dbReference type="GO" id="GO:0098862">
    <property type="term" value="C:cluster of actin-based cell projections"/>
    <property type="evidence" value="ECO:0007669"/>
    <property type="project" value="UniProtKB-ARBA"/>
</dbReference>
<dbReference type="GO" id="GO:0016459">
    <property type="term" value="C:myosin complex"/>
    <property type="evidence" value="ECO:0007669"/>
    <property type="project" value="UniProtKB-KW"/>
</dbReference>
<dbReference type="GO" id="GO:0003779">
    <property type="term" value="F:actin binding"/>
    <property type="evidence" value="ECO:0007669"/>
    <property type="project" value="UniProtKB-KW"/>
</dbReference>
<dbReference type="GO" id="GO:0005524">
    <property type="term" value="F:ATP binding"/>
    <property type="evidence" value="ECO:0007669"/>
    <property type="project" value="UniProtKB-KW"/>
</dbReference>
<dbReference type="GO" id="GO:0003774">
    <property type="term" value="F:cytoskeletal motor activity"/>
    <property type="evidence" value="ECO:0007669"/>
    <property type="project" value="InterPro"/>
</dbReference>
<dbReference type="CDD" id="cd23767">
    <property type="entry name" value="IQCD"/>
    <property type="match status" value="1"/>
</dbReference>
<dbReference type="CDD" id="cd01378">
    <property type="entry name" value="MYSc_Myo1"/>
    <property type="match status" value="1"/>
</dbReference>
<dbReference type="FunFam" id="1.10.10.820:FF:000001">
    <property type="entry name" value="Myosin heavy chain"/>
    <property type="match status" value="1"/>
</dbReference>
<dbReference type="FunFam" id="3.40.850.10:FF:000101">
    <property type="entry name" value="Slow myosin heavy chain 2"/>
    <property type="match status" value="1"/>
</dbReference>
<dbReference type="FunFam" id="1.20.58.530:FF:000004">
    <property type="entry name" value="Unconventional myosin ID"/>
    <property type="match status" value="1"/>
</dbReference>
<dbReference type="Gene3D" id="1.10.10.820">
    <property type="match status" value="1"/>
</dbReference>
<dbReference type="Gene3D" id="1.20.5.190">
    <property type="match status" value="1"/>
</dbReference>
<dbReference type="Gene3D" id="1.20.5.4820">
    <property type="match status" value="1"/>
</dbReference>
<dbReference type="Gene3D" id="1.20.58.530">
    <property type="match status" value="1"/>
</dbReference>
<dbReference type="Gene3D" id="3.40.850.10">
    <property type="entry name" value="Kinesin motor domain"/>
    <property type="match status" value="1"/>
</dbReference>
<dbReference type="Gene3D" id="1.20.120.720">
    <property type="entry name" value="Myosin VI head, motor domain, U50 subdomain"/>
    <property type="match status" value="1"/>
</dbReference>
<dbReference type="InterPro" id="IPR000048">
    <property type="entry name" value="IQ_motif_EF-hand-BS"/>
</dbReference>
<dbReference type="InterPro" id="IPR036961">
    <property type="entry name" value="Kinesin_motor_dom_sf"/>
</dbReference>
<dbReference type="InterPro" id="IPR001609">
    <property type="entry name" value="Myosin_head_motor_dom-like"/>
</dbReference>
<dbReference type="InterPro" id="IPR010926">
    <property type="entry name" value="Myosin_TH1"/>
</dbReference>
<dbReference type="InterPro" id="IPR036072">
    <property type="entry name" value="MYSc_Myo1"/>
</dbReference>
<dbReference type="InterPro" id="IPR027417">
    <property type="entry name" value="P-loop_NTPase"/>
</dbReference>
<dbReference type="PANTHER" id="PTHR13140">
    <property type="entry name" value="MYOSIN"/>
    <property type="match status" value="1"/>
</dbReference>
<dbReference type="PANTHER" id="PTHR13140:SF353">
    <property type="entry name" value="UNCONVENTIONAL MYOSIN-IH"/>
    <property type="match status" value="1"/>
</dbReference>
<dbReference type="Pfam" id="PF00063">
    <property type="entry name" value="Myosin_head"/>
    <property type="match status" value="1"/>
</dbReference>
<dbReference type="Pfam" id="PF06017">
    <property type="entry name" value="Myosin_TH1"/>
    <property type="match status" value="1"/>
</dbReference>
<dbReference type="PRINTS" id="PR00193">
    <property type="entry name" value="MYOSINHEAVY"/>
</dbReference>
<dbReference type="SMART" id="SM00015">
    <property type="entry name" value="IQ"/>
    <property type="match status" value="2"/>
</dbReference>
<dbReference type="SMART" id="SM00242">
    <property type="entry name" value="MYSc"/>
    <property type="match status" value="1"/>
</dbReference>
<dbReference type="SUPFAM" id="SSF52540">
    <property type="entry name" value="P-loop containing nucleoside triphosphate hydrolases"/>
    <property type="match status" value="1"/>
</dbReference>
<dbReference type="PROSITE" id="PS50096">
    <property type="entry name" value="IQ"/>
    <property type="match status" value="2"/>
</dbReference>
<dbReference type="PROSITE" id="PS51456">
    <property type="entry name" value="MYOSIN_MOTOR"/>
    <property type="match status" value="1"/>
</dbReference>
<dbReference type="PROSITE" id="PS51757">
    <property type="entry name" value="TH1"/>
    <property type="match status" value="1"/>
</dbReference>
<protein>
    <recommendedName>
        <fullName>Unconventional myosin-Ih</fullName>
    </recommendedName>
</protein>
<name>MYO1H_MOUSE</name>
<feature type="chain" id="PRO_0000333236" description="Unconventional myosin-Ih">
    <location>
        <begin position="1"/>
        <end position="958"/>
    </location>
</feature>
<feature type="domain" description="Myosin motor" evidence="4">
    <location>
        <begin position="12"/>
        <end position="691"/>
    </location>
</feature>
<feature type="domain" description="IQ 1" evidence="3">
    <location>
        <begin position="694"/>
        <end position="716"/>
    </location>
</feature>
<feature type="domain" description="IQ 2" evidence="3">
    <location>
        <begin position="717"/>
        <end position="746"/>
    </location>
</feature>
<feature type="domain" description="TH1" evidence="5">
    <location>
        <begin position="773"/>
        <end position="955"/>
    </location>
</feature>
<feature type="region of interest" description="Actin-binding" evidence="4">
    <location>
        <begin position="568"/>
        <end position="590"/>
    </location>
</feature>
<feature type="binding site" evidence="1">
    <location>
        <begin position="105"/>
        <end position="112"/>
    </location>
    <ligand>
        <name>ATP</name>
        <dbReference type="ChEBI" id="CHEBI:30616"/>
    </ligand>
</feature>
<feature type="modified residue" description="Phosphoserine" evidence="2">
    <location>
        <position position="365"/>
    </location>
</feature>
<feature type="splice variant" id="VSP_033495" description="In isoform 2." evidence="8 9">
    <location>
        <begin position="1"/>
        <end position="809"/>
    </location>
</feature>
<feature type="splice variant" id="VSP_033496" description="In isoform 2." evidence="8 9">
    <original>GVSTSSLSDGILVIHISPADKQQKGDVILQCEHIFEVATKLAMLIRKEHTVRVVQGSLQFYVSPGREGTIVFETGEEDQVYKDKNGQLRVVSAGKKT</original>
    <variation>DESNINPKVLQLLGSEKIQYGVPVIKYDRKGFKARQRQLLLTQRSAYLVELSKVKQKIEYAAVRGVSTSSLSDGILVIHISPADKQQKVTTASGHKSSLP</variation>
    <location>
        <begin position="862"/>
        <end position="958"/>
    </location>
</feature>
<gene>
    <name type="primary">Myo1h</name>
</gene>
<sequence>MEGALTARDKVGVQDFVLLDAYTSESAFLENLRKRFRENLIYTYIGTLLVSVNPYQELGIYTASQMELYQGVNFFELPPHVYAIADNAYRMMCSELNNHFILISGESGAGKTEASKKILQYFAVTCPMTESLQIARDRLLLSIPVLEAFGNAKTLRNDNSSRFGKYMDIQFDFQGVPVGGHIISYLIEKSRVVYQNHGERNFHIFYQLLAGGGSERLASLGLERDPQLYKYLSQGHCARESPISDKNDWETVCGAFSVIGFTEADLENLFGIIASVLHLGNVCFKGDKQGCASVPDTHEIKWIAKLLGVCPAVLLEALTHRKIEAKTEEVICPLTVELSVYARDAMAKAVYGRTFTWLVNRINSSLVNKDFTQKTVIGLLDIYGFEVFDKNGFEQFCINYCNEKLQQLLIERTLKAEQAEYESEGIEWETVQYFNNKIICDLVEERHRGIISILDEECIRPGPATDLSFLEKLEEKVGKHAHFQTRKLAGPKGRKRIGWLEFCLLHYAGEVTYCTKGFLEKNNDLLYRHLKEVLCSSKNSILRECFLVAELENRRRPPTVGTQFKNSLSSLLEILISKEPSYIRCIKPNERKEPSKFDDFLISHQIKYLGLMEHLRVRRAGFAYRRKYEHFLQRYKSLCPDTWPHWHGPPGEGVERLIKYIGYQPQDYKLGKTKIFIRFPRTLFATEDAFEFSKHQLVSRIQATYKGCLGRREYMKKRQAATKLEAHWRGVLARKEIKRRRWAVQIIRRFVKGFINRDKPLCPDNEEFVVLVRKNYILNLRYHVPKNVLDKSWLRPPGILENASNLLRRMCTRNLVRKYCRGISAERKAMMQQKVVTSEIFRGKKEGYAESLNQLFAGSRLGVSTSSLSDGILVIHISPADKQQKGDVILQCEHIFEVATKLAMLIRKEHTVRVVQGSLQFYVSPGREGTIVFETGEEDQVYKDKNGQLRVVSAGKKT</sequence>
<proteinExistence type="evidence at transcript level"/>
<evidence type="ECO:0000250" key="1"/>
<evidence type="ECO:0000250" key="2">
    <source>
        <dbReference type="UniProtKB" id="Q8N1T3"/>
    </source>
</evidence>
<evidence type="ECO:0000255" key="3">
    <source>
        <dbReference type="PROSITE-ProRule" id="PRU00116"/>
    </source>
</evidence>
<evidence type="ECO:0000255" key="4">
    <source>
        <dbReference type="PROSITE-ProRule" id="PRU00782"/>
    </source>
</evidence>
<evidence type="ECO:0000255" key="5">
    <source>
        <dbReference type="PROSITE-ProRule" id="PRU01093"/>
    </source>
</evidence>
<evidence type="ECO:0000269" key="6">
    <source>
    </source>
</evidence>
<evidence type="ECO:0000269" key="7">
    <source>
    </source>
</evidence>
<evidence type="ECO:0000303" key="8">
    <source>
    </source>
</evidence>
<evidence type="ECO:0000303" key="9">
    <source>
    </source>
</evidence>
<evidence type="ECO:0000305" key="10"/>
<organism>
    <name type="scientific">Mus musculus</name>
    <name type="common">Mouse</name>
    <dbReference type="NCBI Taxonomy" id="10090"/>
    <lineage>
        <taxon>Eukaryota</taxon>
        <taxon>Metazoa</taxon>
        <taxon>Chordata</taxon>
        <taxon>Craniata</taxon>
        <taxon>Vertebrata</taxon>
        <taxon>Euteleostomi</taxon>
        <taxon>Mammalia</taxon>
        <taxon>Eutheria</taxon>
        <taxon>Euarchontoglires</taxon>
        <taxon>Glires</taxon>
        <taxon>Rodentia</taxon>
        <taxon>Myomorpha</taxon>
        <taxon>Muroidea</taxon>
        <taxon>Muridae</taxon>
        <taxon>Murinae</taxon>
        <taxon>Mus</taxon>
        <taxon>Mus</taxon>
    </lineage>
</organism>
<comment type="function">
    <text evidence="1">Myosins are actin-based motor molecules with ATPase activity. Unconventional myosins serve in intracellular movements. Their highly divergent tails are presumed to bind to membranous compartments, which would be moved relative to actin filaments (By similarity).</text>
</comment>
<comment type="alternative products">
    <event type="alternative splicing"/>
    <isoform>
        <id>Q9D6A1-1</id>
        <name>1</name>
        <sequence type="displayed"/>
    </isoform>
    <isoform>
        <id>Q9D6A1-2</id>
        <name>2</name>
        <sequence type="described" ref="VSP_033495 VSP_033496"/>
    </isoform>
</comment>
<comment type="tissue specificity">
    <text evidence="6 7">Highly expressed in the central nervous system, including the forebrain, midbrain and lower medulla. In the lower medulla, it is broadly expressed throughout the reticular formation. It is expressed in the retrotrapezoid nucleus and the nucleus of the solitary tract, as well as motor neurons of the facial, vagal and ambiguus nuclei (PubMed:28779001). Expressed in neonatal inner-ear organs.</text>
</comment>
<comment type="similarity">
    <text evidence="10">Belongs to the TRAFAC class myosin-kinesin ATPase superfamily. Myosin family.</text>
</comment>
<comment type="caution">
    <text evidence="10">Represents an unconventional myosin. This protein should not be confused with the conventional myosin-1 (MYH1).</text>
</comment>
<keyword id="KW-0009">Actin-binding</keyword>
<keyword id="KW-0025">Alternative splicing</keyword>
<keyword id="KW-0067">ATP-binding</keyword>
<keyword id="KW-0505">Motor protein</keyword>
<keyword id="KW-0518">Myosin</keyword>
<keyword id="KW-0547">Nucleotide-binding</keyword>
<keyword id="KW-0597">Phosphoprotein</keyword>
<keyword id="KW-1185">Reference proteome</keyword>
<keyword id="KW-0677">Repeat</keyword>
<reference key="1">
    <citation type="journal article" date="2005" name="Science">
        <title>The transcriptional landscape of the mammalian genome.</title>
        <authorList>
            <person name="Carninci P."/>
            <person name="Kasukawa T."/>
            <person name="Katayama S."/>
            <person name="Gough J."/>
            <person name="Frith M.C."/>
            <person name="Maeda N."/>
            <person name="Oyama R."/>
            <person name="Ravasi T."/>
            <person name="Lenhard B."/>
            <person name="Wells C."/>
            <person name="Kodzius R."/>
            <person name="Shimokawa K."/>
            <person name="Bajic V.B."/>
            <person name="Brenner S.E."/>
            <person name="Batalov S."/>
            <person name="Forrest A.R."/>
            <person name="Zavolan M."/>
            <person name="Davis M.J."/>
            <person name="Wilming L.G."/>
            <person name="Aidinis V."/>
            <person name="Allen J.E."/>
            <person name="Ambesi-Impiombato A."/>
            <person name="Apweiler R."/>
            <person name="Aturaliya R.N."/>
            <person name="Bailey T.L."/>
            <person name="Bansal M."/>
            <person name="Baxter L."/>
            <person name="Beisel K.W."/>
            <person name="Bersano T."/>
            <person name="Bono H."/>
            <person name="Chalk A.M."/>
            <person name="Chiu K.P."/>
            <person name="Choudhary V."/>
            <person name="Christoffels A."/>
            <person name="Clutterbuck D.R."/>
            <person name="Crowe M.L."/>
            <person name="Dalla E."/>
            <person name="Dalrymple B.P."/>
            <person name="de Bono B."/>
            <person name="Della Gatta G."/>
            <person name="di Bernardo D."/>
            <person name="Down T."/>
            <person name="Engstrom P."/>
            <person name="Fagiolini M."/>
            <person name="Faulkner G."/>
            <person name="Fletcher C.F."/>
            <person name="Fukushima T."/>
            <person name="Furuno M."/>
            <person name="Futaki S."/>
            <person name="Gariboldi M."/>
            <person name="Georgii-Hemming P."/>
            <person name="Gingeras T.R."/>
            <person name="Gojobori T."/>
            <person name="Green R.E."/>
            <person name="Gustincich S."/>
            <person name="Harbers M."/>
            <person name="Hayashi Y."/>
            <person name="Hensch T.K."/>
            <person name="Hirokawa N."/>
            <person name="Hill D."/>
            <person name="Huminiecki L."/>
            <person name="Iacono M."/>
            <person name="Ikeo K."/>
            <person name="Iwama A."/>
            <person name="Ishikawa T."/>
            <person name="Jakt M."/>
            <person name="Kanapin A."/>
            <person name="Katoh M."/>
            <person name="Kawasawa Y."/>
            <person name="Kelso J."/>
            <person name="Kitamura H."/>
            <person name="Kitano H."/>
            <person name="Kollias G."/>
            <person name="Krishnan S.P."/>
            <person name="Kruger A."/>
            <person name="Kummerfeld S.K."/>
            <person name="Kurochkin I.V."/>
            <person name="Lareau L.F."/>
            <person name="Lazarevic D."/>
            <person name="Lipovich L."/>
            <person name="Liu J."/>
            <person name="Liuni S."/>
            <person name="McWilliam S."/>
            <person name="Madan Babu M."/>
            <person name="Madera M."/>
            <person name="Marchionni L."/>
            <person name="Matsuda H."/>
            <person name="Matsuzawa S."/>
            <person name="Miki H."/>
            <person name="Mignone F."/>
            <person name="Miyake S."/>
            <person name="Morris K."/>
            <person name="Mottagui-Tabar S."/>
            <person name="Mulder N."/>
            <person name="Nakano N."/>
            <person name="Nakauchi H."/>
            <person name="Ng P."/>
            <person name="Nilsson R."/>
            <person name="Nishiguchi S."/>
            <person name="Nishikawa S."/>
            <person name="Nori F."/>
            <person name="Ohara O."/>
            <person name="Okazaki Y."/>
            <person name="Orlando V."/>
            <person name="Pang K.C."/>
            <person name="Pavan W.J."/>
            <person name="Pavesi G."/>
            <person name="Pesole G."/>
            <person name="Petrovsky N."/>
            <person name="Piazza S."/>
            <person name="Reed J."/>
            <person name="Reid J.F."/>
            <person name="Ring B.Z."/>
            <person name="Ringwald M."/>
            <person name="Rost B."/>
            <person name="Ruan Y."/>
            <person name="Salzberg S.L."/>
            <person name="Sandelin A."/>
            <person name="Schneider C."/>
            <person name="Schoenbach C."/>
            <person name="Sekiguchi K."/>
            <person name="Semple C.A."/>
            <person name="Seno S."/>
            <person name="Sessa L."/>
            <person name="Sheng Y."/>
            <person name="Shibata Y."/>
            <person name="Shimada H."/>
            <person name="Shimada K."/>
            <person name="Silva D."/>
            <person name="Sinclair B."/>
            <person name="Sperling S."/>
            <person name="Stupka E."/>
            <person name="Sugiura K."/>
            <person name="Sultana R."/>
            <person name="Takenaka Y."/>
            <person name="Taki K."/>
            <person name="Tammoja K."/>
            <person name="Tan S.L."/>
            <person name="Tang S."/>
            <person name="Taylor M.S."/>
            <person name="Tegner J."/>
            <person name="Teichmann S.A."/>
            <person name="Ueda H.R."/>
            <person name="van Nimwegen E."/>
            <person name="Verardo R."/>
            <person name="Wei C.L."/>
            <person name="Yagi K."/>
            <person name="Yamanishi H."/>
            <person name="Zabarovsky E."/>
            <person name="Zhu S."/>
            <person name="Zimmer A."/>
            <person name="Hide W."/>
            <person name="Bult C."/>
            <person name="Grimmond S.M."/>
            <person name="Teasdale R.D."/>
            <person name="Liu E.T."/>
            <person name="Brusic V."/>
            <person name="Quackenbush J."/>
            <person name="Wahlestedt C."/>
            <person name="Mattick J.S."/>
            <person name="Hume D.A."/>
            <person name="Kai C."/>
            <person name="Sasaki D."/>
            <person name="Tomaru Y."/>
            <person name="Fukuda S."/>
            <person name="Kanamori-Katayama M."/>
            <person name="Suzuki M."/>
            <person name="Aoki J."/>
            <person name="Arakawa T."/>
            <person name="Iida J."/>
            <person name="Imamura K."/>
            <person name="Itoh M."/>
            <person name="Kato T."/>
            <person name="Kawaji H."/>
            <person name="Kawagashira N."/>
            <person name="Kawashima T."/>
            <person name="Kojima M."/>
            <person name="Kondo S."/>
            <person name="Konno H."/>
            <person name="Nakano K."/>
            <person name="Ninomiya N."/>
            <person name="Nishio T."/>
            <person name="Okada M."/>
            <person name="Plessy C."/>
            <person name="Shibata K."/>
            <person name="Shiraki T."/>
            <person name="Suzuki S."/>
            <person name="Tagami M."/>
            <person name="Waki K."/>
            <person name="Watahiki A."/>
            <person name="Okamura-Oho Y."/>
            <person name="Suzuki H."/>
            <person name="Kawai J."/>
            <person name="Hayashizaki Y."/>
        </authorList>
    </citation>
    <scope>NUCLEOTIDE SEQUENCE [LARGE SCALE MRNA] (ISOFORM 2)</scope>
    <source>
        <strain>C57BL/6J</strain>
        <tissue>Skin</tissue>
    </source>
</reference>
<reference key="2">
    <citation type="journal article" date="2009" name="PLoS Biol.">
        <title>Lineage-specific biology revealed by a finished genome assembly of the mouse.</title>
        <authorList>
            <person name="Church D.M."/>
            <person name="Goodstadt L."/>
            <person name="Hillier L.W."/>
            <person name="Zody M.C."/>
            <person name="Goldstein S."/>
            <person name="She X."/>
            <person name="Bult C.J."/>
            <person name="Agarwala R."/>
            <person name="Cherry J.L."/>
            <person name="DiCuccio M."/>
            <person name="Hlavina W."/>
            <person name="Kapustin Y."/>
            <person name="Meric P."/>
            <person name="Maglott D."/>
            <person name="Birtle Z."/>
            <person name="Marques A.C."/>
            <person name="Graves T."/>
            <person name="Zhou S."/>
            <person name="Teague B."/>
            <person name="Potamousis K."/>
            <person name="Churas C."/>
            <person name="Place M."/>
            <person name="Herschleb J."/>
            <person name="Runnheim R."/>
            <person name="Forrest D."/>
            <person name="Amos-Landgraf J."/>
            <person name="Schwartz D.C."/>
            <person name="Cheng Z."/>
            <person name="Lindblad-Toh K."/>
            <person name="Eichler E.E."/>
            <person name="Ponting C.P."/>
        </authorList>
    </citation>
    <scope>NUCLEOTIDE SEQUENCE [LARGE SCALE GENOMIC DNA]</scope>
    <source>
        <strain>C57BL/6J</strain>
    </source>
</reference>
<reference key="3">
    <citation type="journal article" date="2002" name="J. Assoc. Res. Otolaryngol.">
        <title>Myosin-I isozymes in neonatal rodent auditory and vestibular epithelia.</title>
        <authorList>
            <person name="Dumont R.A."/>
            <person name="Zhao Y.-D."/>
            <person name="Holt J.R."/>
            <person name="Baehler M."/>
            <person name="Gillespie P.G."/>
        </authorList>
    </citation>
    <scope>NUCLEOTIDE SEQUENCE [MRNA] OF 1-902 (ISOFORM 2)</scope>
    <scope>TISSUE SPECIFICITY</scope>
    <source>
        <strain>C57BL/6J</strain>
    </source>
</reference>
<reference key="4">
    <citation type="journal article" date="2017" name="J. Med. Genet.">
        <title>Mutations in MYO1H cause a recessive form of central hypoventilation with autonomic dysfunction.</title>
        <authorList>
            <person name="Spielmann M."/>
            <person name="Hernandez-Miranda L.R."/>
            <person name="Ceccherini I."/>
            <person name="Weese-Mayer D.E."/>
            <person name="Kragesteen B.K."/>
            <person name="Harabula I."/>
            <person name="Krawitz P."/>
            <person name="Birchmeier C."/>
            <person name="Leonard N."/>
            <person name="Mundlos S."/>
        </authorList>
    </citation>
    <scope>TISSUE SPECIFICITY</scope>
</reference>
<accession>Q9D6A1</accession>
<accession>Q91ZI2</accession>